<feature type="chain" id="PRO_0000122167" description="Serine--tRNA ligase">
    <location>
        <begin position="1"/>
        <end position="430"/>
    </location>
</feature>
<feature type="binding site" evidence="1">
    <location>
        <begin position="237"/>
        <end position="239"/>
    </location>
    <ligand>
        <name>L-serine</name>
        <dbReference type="ChEBI" id="CHEBI:33384"/>
    </ligand>
</feature>
<feature type="binding site" evidence="1">
    <location>
        <begin position="268"/>
        <end position="270"/>
    </location>
    <ligand>
        <name>ATP</name>
        <dbReference type="ChEBI" id="CHEBI:30616"/>
    </ligand>
</feature>
<feature type="binding site" evidence="1">
    <location>
        <position position="291"/>
    </location>
    <ligand>
        <name>L-serine</name>
        <dbReference type="ChEBI" id="CHEBI:33384"/>
    </ligand>
</feature>
<feature type="binding site" evidence="1">
    <location>
        <begin position="355"/>
        <end position="358"/>
    </location>
    <ligand>
        <name>ATP</name>
        <dbReference type="ChEBI" id="CHEBI:30616"/>
    </ligand>
</feature>
<feature type="binding site" evidence="1">
    <location>
        <position position="391"/>
    </location>
    <ligand>
        <name>L-serine</name>
        <dbReference type="ChEBI" id="CHEBI:33384"/>
    </ligand>
</feature>
<keyword id="KW-0030">Aminoacyl-tRNA synthetase</keyword>
<keyword id="KW-0067">ATP-binding</keyword>
<keyword id="KW-0963">Cytoplasm</keyword>
<keyword id="KW-0436">Ligase</keyword>
<keyword id="KW-0547">Nucleotide-binding</keyword>
<keyword id="KW-0648">Protein biosynthesis</keyword>
<name>SYS_YERPS</name>
<evidence type="ECO:0000255" key="1">
    <source>
        <dbReference type="HAMAP-Rule" id="MF_00176"/>
    </source>
</evidence>
<protein>
    <recommendedName>
        <fullName evidence="1">Serine--tRNA ligase</fullName>
        <ecNumber evidence="1">6.1.1.11</ecNumber>
    </recommendedName>
    <alternativeName>
        <fullName evidence="1">Seryl-tRNA synthetase</fullName>
        <shortName evidence="1">SerRS</shortName>
    </alternativeName>
    <alternativeName>
        <fullName evidence="1">Seryl-tRNA(Ser/Sec) synthetase</fullName>
    </alternativeName>
</protein>
<reference key="1">
    <citation type="journal article" date="2004" name="Proc. Natl. Acad. Sci. U.S.A.">
        <title>Insights into the evolution of Yersinia pestis through whole-genome comparison with Yersinia pseudotuberculosis.</title>
        <authorList>
            <person name="Chain P.S.G."/>
            <person name="Carniel E."/>
            <person name="Larimer F.W."/>
            <person name="Lamerdin J."/>
            <person name="Stoutland P.O."/>
            <person name="Regala W.M."/>
            <person name="Georgescu A.M."/>
            <person name="Vergez L.M."/>
            <person name="Land M.L."/>
            <person name="Motin V.L."/>
            <person name="Brubaker R.R."/>
            <person name="Fowler J."/>
            <person name="Hinnebusch J."/>
            <person name="Marceau M."/>
            <person name="Medigue C."/>
            <person name="Simonet M."/>
            <person name="Chenal-Francisque V."/>
            <person name="Souza B."/>
            <person name="Dacheux D."/>
            <person name="Elliott J.M."/>
            <person name="Derbise A."/>
            <person name="Hauser L.J."/>
            <person name="Garcia E."/>
        </authorList>
    </citation>
    <scope>NUCLEOTIDE SEQUENCE [LARGE SCALE GENOMIC DNA]</scope>
    <source>
        <strain>IP32953</strain>
    </source>
</reference>
<accession>Q66CJ9</accession>
<comment type="function">
    <text evidence="1">Catalyzes the attachment of serine to tRNA(Ser). Is also able to aminoacylate tRNA(Sec) with serine, to form the misacylated tRNA L-seryl-tRNA(Sec), which will be further converted into selenocysteinyl-tRNA(Sec).</text>
</comment>
<comment type="catalytic activity">
    <reaction evidence="1">
        <text>tRNA(Ser) + L-serine + ATP = L-seryl-tRNA(Ser) + AMP + diphosphate + H(+)</text>
        <dbReference type="Rhea" id="RHEA:12292"/>
        <dbReference type="Rhea" id="RHEA-COMP:9669"/>
        <dbReference type="Rhea" id="RHEA-COMP:9703"/>
        <dbReference type="ChEBI" id="CHEBI:15378"/>
        <dbReference type="ChEBI" id="CHEBI:30616"/>
        <dbReference type="ChEBI" id="CHEBI:33019"/>
        <dbReference type="ChEBI" id="CHEBI:33384"/>
        <dbReference type="ChEBI" id="CHEBI:78442"/>
        <dbReference type="ChEBI" id="CHEBI:78533"/>
        <dbReference type="ChEBI" id="CHEBI:456215"/>
        <dbReference type="EC" id="6.1.1.11"/>
    </reaction>
</comment>
<comment type="catalytic activity">
    <reaction evidence="1">
        <text>tRNA(Sec) + L-serine + ATP = L-seryl-tRNA(Sec) + AMP + diphosphate + H(+)</text>
        <dbReference type="Rhea" id="RHEA:42580"/>
        <dbReference type="Rhea" id="RHEA-COMP:9742"/>
        <dbReference type="Rhea" id="RHEA-COMP:10128"/>
        <dbReference type="ChEBI" id="CHEBI:15378"/>
        <dbReference type="ChEBI" id="CHEBI:30616"/>
        <dbReference type="ChEBI" id="CHEBI:33019"/>
        <dbReference type="ChEBI" id="CHEBI:33384"/>
        <dbReference type="ChEBI" id="CHEBI:78442"/>
        <dbReference type="ChEBI" id="CHEBI:78533"/>
        <dbReference type="ChEBI" id="CHEBI:456215"/>
        <dbReference type="EC" id="6.1.1.11"/>
    </reaction>
</comment>
<comment type="pathway">
    <text evidence="1">Aminoacyl-tRNA biosynthesis; selenocysteinyl-tRNA(Sec) biosynthesis; L-seryl-tRNA(Sec) from L-serine and tRNA(Sec): step 1/1.</text>
</comment>
<comment type="subunit">
    <text evidence="1">Homodimer. The tRNA molecule binds across the dimer.</text>
</comment>
<comment type="subcellular location">
    <subcellularLocation>
        <location evidence="1">Cytoplasm</location>
    </subcellularLocation>
</comment>
<comment type="domain">
    <text evidence="1">Consists of two distinct domains, a catalytic core and a N-terminal extension that is involved in tRNA binding.</text>
</comment>
<comment type="similarity">
    <text evidence="1">Belongs to the class-II aminoacyl-tRNA synthetase family. Type-1 seryl-tRNA synthetase subfamily.</text>
</comment>
<sequence>MLDPNMLRNELDAVAEKLARRGFKLDVEVLRQQEERRKVLQVETESLQAERNSRSKQIGAAKARGEDIEPLRLEVNALGEKLDAAKAELDKLQNEIRDLALSIPNLPDDSVPVGKNENDNIEVSRWGEPRKYDFDVKDHVSLGEMAGGLDFAAAVKLTGARFVVMKGQIARMHRALSQFMLDLHTEKHGYLEAYVPYLVNHATLYGTGQLPKFGEDLFHTKPLAEESDNSNYALIPTAEVPLTNLVRDEILEEDSLPLKLTAHTPCFRSEAGSYGRDTRGLIRMHQFDKVEMVQITRPEDSMAALEELTGHAEKVLQLLELPYRKVLLCTGDMGFGSSKTYDLEVWLPAQDTYREISSCSNMWDFQARRMQARYRNKTDRKTRLVHTLNGSGLAVGRTLVAVLENYQQADGRIQVPDVLRPYMGGLEYIG</sequence>
<proteinExistence type="inferred from homology"/>
<gene>
    <name evidence="1" type="primary">serS</name>
    <name type="ordered locus">YPTB1404</name>
</gene>
<organism>
    <name type="scientific">Yersinia pseudotuberculosis serotype I (strain IP32953)</name>
    <dbReference type="NCBI Taxonomy" id="273123"/>
    <lineage>
        <taxon>Bacteria</taxon>
        <taxon>Pseudomonadati</taxon>
        <taxon>Pseudomonadota</taxon>
        <taxon>Gammaproteobacteria</taxon>
        <taxon>Enterobacterales</taxon>
        <taxon>Yersiniaceae</taxon>
        <taxon>Yersinia</taxon>
    </lineage>
</organism>
<dbReference type="EC" id="6.1.1.11" evidence="1"/>
<dbReference type="EMBL" id="BX936398">
    <property type="protein sequence ID" value="CAH20644.1"/>
    <property type="molecule type" value="Genomic_DNA"/>
</dbReference>
<dbReference type="RefSeq" id="WP_002211336.1">
    <property type="nucleotide sequence ID" value="NZ_CP009712.1"/>
</dbReference>
<dbReference type="SMR" id="Q66CJ9"/>
<dbReference type="GeneID" id="57977175"/>
<dbReference type="KEGG" id="ypo:BZ17_1114"/>
<dbReference type="KEGG" id="yps:YPTB1404"/>
<dbReference type="PATRIC" id="fig|273123.14.peg.1182"/>
<dbReference type="UniPathway" id="UPA00906">
    <property type="reaction ID" value="UER00895"/>
</dbReference>
<dbReference type="Proteomes" id="UP000001011">
    <property type="component" value="Chromosome"/>
</dbReference>
<dbReference type="GO" id="GO:0005737">
    <property type="term" value="C:cytoplasm"/>
    <property type="evidence" value="ECO:0007669"/>
    <property type="project" value="UniProtKB-SubCell"/>
</dbReference>
<dbReference type="GO" id="GO:0005524">
    <property type="term" value="F:ATP binding"/>
    <property type="evidence" value="ECO:0007669"/>
    <property type="project" value="UniProtKB-UniRule"/>
</dbReference>
<dbReference type="GO" id="GO:0004828">
    <property type="term" value="F:serine-tRNA ligase activity"/>
    <property type="evidence" value="ECO:0007669"/>
    <property type="project" value="UniProtKB-UniRule"/>
</dbReference>
<dbReference type="GO" id="GO:0016260">
    <property type="term" value="P:selenocysteine biosynthetic process"/>
    <property type="evidence" value="ECO:0007669"/>
    <property type="project" value="UniProtKB-UniRule"/>
</dbReference>
<dbReference type="GO" id="GO:0006434">
    <property type="term" value="P:seryl-tRNA aminoacylation"/>
    <property type="evidence" value="ECO:0007669"/>
    <property type="project" value="UniProtKB-UniRule"/>
</dbReference>
<dbReference type="CDD" id="cd00770">
    <property type="entry name" value="SerRS_core"/>
    <property type="match status" value="1"/>
</dbReference>
<dbReference type="FunFam" id="1.10.287.40:FF:000001">
    <property type="entry name" value="Serine--tRNA ligase"/>
    <property type="match status" value="1"/>
</dbReference>
<dbReference type="FunFam" id="3.30.930.10:FF:000018">
    <property type="entry name" value="Serine--tRNA ligase"/>
    <property type="match status" value="1"/>
</dbReference>
<dbReference type="Gene3D" id="3.30.930.10">
    <property type="entry name" value="Bira Bifunctional Protein, Domain 2"/>
    <property type="match status" value="1"/>
</dbReference>
<dbReference type="Gene3D" id="1.10.287.40">
    <property type="entry name" value="Serine-tRNA synthetase, tRNA binding domain"/>
    <property type="match status" value="1"/>
</dbReference>
<dbReference type="HAMAP" id="MF_00176">
    <property type="entry name" value="Ser_tRNA_synth_type1"/>
    <property type="match status" value="1"/>
</dbReference>
<dbReference type="InterPro" id="IPR002314">
    <property type="entry name" value="aa-tRNA-synt_IIb"/>
</dbReference>
<dbReference type="InterPro" id="IPR006195">
    <property type="entry name" value="aa-tRNA-synth_II"/>
</dbReference>
<dbReference type="InterPro" id="IPR045864">
    <property type="entry name" value="aa-tRNA-synth_II/BPL/LPL"/>
</dbReference>
<dbReference type="InterPro" id="IPR002317">
    <property type="entry name" value="Ser-tRNA-ligase_type_1"/>
</dbReference>
<dbReference type="InterPro" id="IPR015866">
    <property type="entry name" value="Ser-tRNA-synth_1_N"/>
</dbReference>
<dbReference type="InterPro" id="IPR042103">
    <property type="entry name" value="SerRS_1_N_sf"/>
</dbReference>
<dbReference type="InterPro" id="IPR033729">
    <property type="entry name" value="SerRS_core"/>
</dbReference>
<dbReference type="InterPro" id="IPR010978">
    <property type="entry name" value="tRNA-bd_arm"/>
</dbReference>
<dbReference type="NCBIfam" id="TIGR00414">
    <property type="entry name" value="serS"/>
    <property type="match status" value="1"/>
</dbReference>
<dbReference type="PANTHER" id="PTHR43697:SF1">
    <property type="entry name" value="SERINE--TRNA LIGASE"/>
    <property type="match status" value="1"/>
</dbReference>
<dbReference type="PANTHER" id="PTHR43697">
    <property type="entry name" value="SERYL-TRNA SYNTHETASE"/>
    <property type="match status" value="1"/>
</dbReference>
<dbReference type="Pfam" id="PF02403">
    <property type="entry name" value="Seryl_tRNA_N"/>
    <property type="match status" value="1"/>
</dbReference>
<dbReference type="Pfam" id="PF00587">
    <property type="entry name" value="tRNA-synt_2b"/>
    <property type="match status" value="1"/>
</dbReference>
<dbReference type="PIRSF" id="PIRSF001529">
    <property type="entry name" value="Ser-tRNA-synth_IIa"/>
    <property type="match status" value="1"/>
</dbReference>
<dbReference type="PRINTS" id="PR00981">
    <property type="entry name" value="TRNASYNTHSER"/>
</dbReference>
<dbReference type="SUPFAM" id="SSF55681">
    <property type="entry name" value="Class II aaRS and biotin synthetases"/>
    <property type="match status" value="1"/>
</dbReference>
<dbReference type="SUPFAM" id="SSF46589">
    <property type="entry name" value="tRNA-binding arm"/>
    <property type="match status" value="1"/>
</dbReference>
<dbReference type="PROSITE" id="PS50862">
    <property type="entry name" value="AA_TRNA_LIGASE_II"/>
    <property type="match status" value="1"/>
</dbReference>